<comment type="sequence caution" evidence="2">
    <conflict type="erroneous initiation">
        <sequence resource="EMBL-CDS" id="AAF10886"/>
    </conflict>
</comment>
<proteinExistence type="evidence at protein level"/>
<dbReference type="EMBL" id="AE000513">
    <property type="protein sequence ID" value="AAF10886.1"/>
    <property type="status" value="ALT_INIT"/>
    <property type="molecule type" value="Genomic_DNA"/>
</dbReference>
<dbReference type="PIR" id="F75410">
    <property type="entry name" value="F75410"/>
</dbReference>
<dbReference type="RefSeq" id="NP_295038.1">
    <property type="nucleotide sequence ID" value="NC_001263.1"/>
</dbReference>
<dbReference type="RefSeq" id="WP_027480014.1">
    <property type="nucleotide sequence ID" value="NC_001263.1"/>
</dbReference>
<dbReference type="SMR" id="Q9RUR8"/>
<dbReference type="FunCoup" id="Q9RUR8">
    <property type="interactions" value="12"/>
</dbReference>
<dbReference type="STRING" id="243230.DR_1314"/>
<dbReference type="PaxDb" id="243230-DR_1314"/>
<dbReference type="EnsemblBacteria" id="AAF10886">
    <property type="protein sequence ID" value="AAF10886"/>
    <property type="gene ID" value="DR_1314"/>
</dbReference>
<dbReference type="GeneID" id="69517562"/>
<dbReference type="KEGG" id="dra:DR_1314"/>
<dbReference type="PATRIC" id="fig|243230.17.peg.1508"/>
<dbReference type="eggNOG" id="COG3861">
    <property type="taxonomic scope" value="Bacteria"/>
</dbReference>
<dbReference type="HOGENOM" id="CLU_079871_0_0_0"/>
<dbReference type="InParanoid" id="Q9RUR8"/>
<dbReference type="OrthoDB" id="9793882at2"/>
<dbReference type="Proteomes" id="UP000002524">
    <property type="component" value="Chromosome 1"/>
</dbReference>
<dbReference type="GO" id="GO:0030077">
    <property type="term" value="C:plasma membrane light-harvesting complex"/>
    <property type="evidence" value="ECO:0007669"/>
    <property type="project" value="InterPro"/>
</dbReference>
<dbReference type="GO" id="GO:0045156">
    <property type="term" value="F:electron transporter, transferring electrons within the cyclic electron transport pathway of photosynthesis activity"/>
    <property type="evidence" value="ECO:0007669"/>
    <property type="project" value="InterPro"/>
</dbReference>
<dbReference type="GO" id="GO:0019684">
    <property type="term" value="P:photosynthesis, light reaction"/>
    <property type="evidence" value="ECO:0007669"/>
    <property type="project" value="InterPro"/>
</dbReference>
<dbReference type="Gene3D" id="3.90.50.10">
    <property type="entry name" value="Photosynthetic Reaction Center, subunit H, domain 2"/>
    <property type="match status" value="1"/>
</dbReference>
<dbReference type="InterPro" id="IPR014747">
    <property type="entry name" value="Bac_photo_RC_H_C"/>
</dbReference>
<dbReference type="InterPro" id="IPR019060">
    <property type="entry name" value="DUF2382"/>
</dbReference>
<dbReference type="InterPro" id="IPR027275">
    <property type="entry name" value="PRC-brl_dom"/>
</dbReference>
<dbReference type="InterPro" id="IPR011033">
    <property type="entry name" value="PRC_barrel-like_sf"/>
</dbReference>
<dbReference type="InterPro" id="IPR052967">
    <property type="entry name" value="Stress_Response_Assoc"/>
</dbReference>
<dbReference type="NCBIfam" id="TIGR02271">
    <property type="entry name" value="YsnF/AvaK domain"/>
    <property type="match status" value="1"/>
</dbReference>
<dbReference type="PANTHER" id="PTHR38463">
    <property type="entry name" value="STRESS RESPONSE PROTEIN YSNF"/>
    <property type="match status" value="1"/>
</dbReference>
<dbReference type="PANTHER" id="PTHR38463:SF1">
    <property type="entry name" value="STRESS RESPONSE PROTEIN YSNF"/>
    <property type="match status" value="1"/>
</dbReference>
<dbReference type="Pfam" id="PF09557">
    <property type="entry name" value="DUF2382"/>
    <property type="match status" value="1"/>
</dbReference>
<dbReference type="Pfam" id="PF05239">
    <property type="entry name" value="PRC"/>
    <property type="match status" value="1"/>
</dbReference>
<dbReference type="SUPFAM" id="SSF50346">
    <property type="entry name" value="PRC-barrel domain"/>
    <property type="match status" value="1"/>
</dbReference>
<organism>
    <name type="scientific">Deinococcus radiodurans (strain ATCC 13939 / DSM 20539 / JCM 16871 / CCUG 27074 / LMG 4051 / NBRC 15346 / NCIMB 9279 / VKM B-1422 / R1)</name>
    <dbReference type="NCBI Taxonomy" id="243230"/>
    <lineage>
        <taxon>Bacteria</taxon>
        <taxon>Thermotogati</taxon>
        <taxon>Deinococcota</taxon>
        <taxon>Deinococci</taxon>
        <taxon>Deinococcales</taxon>
        <taxon>Deinococcaceae</taxon>
        <taxon>Deinococcus</taxon>
    </lineage>
</organism>
<keyword id="KW-0903">Direct protein sequencing</keyword>
<keyword id="KW-1185">Reference proteome</keyword>
<sequence length="274" mass="30607">MTQASLIRLSELNNDAQYNLNDTSMYNPVGAAAYGVNGDKIGTVRDALVEPETGRIRYFLVDVGGWFSSKEVLVPVGYGRVDDSGVYFDSLTKDQVKDMSEYRADQAYSSEMMDTDERVLRGNQSQEEYHQRAYQTPDRLQLLEERLVVNKDRFKAGSVQIGKRIETRQETVSVPLQREEVVIERHAVTDGRAVEGAVLGEGHQTMSVDLEAERANISKQAYVTEEVSVGKRAVTETQQVTETVGREVLDVNQTGDVRTTEGTALTDDTTKRNI</sequence>
<gene>
    <name type="ordered locus">DR_1314</name>
</gene>
<feature type="chain" id="PRO_0000221643" description="Uncharacterized protein DR_1314">
    <location>
        <begin position="1"/>
        <end position="274"/>
    </location>
</feature>
<feature type="region of interest" description="Disordered" evidence="1">
    <location>
        <begin position="253"/>
        <end position="274"/>
    </location>
</feature>
<evidence type="ECO:0000256" key="1">
    <source>
        <dbReference type="SAM" id="MobiDB-lite"/>
    </source>
</evidence>
<evidence type="ECO:0000305" key="2"/>
<accession>Q9RUR8</accession>
<name>Y1314_DEIRA</name>
<protein>
    <recommendedName>
        <fullName>Uncharacterized protein DR_1314</fullName>
    </recommendedName>
</protein>
<reference key="1">
    <citation type="journal article" date="1999" name="Science">
        <title>Genome sequence of the radioresistant bacterium Deinococcus radiodurans R1.</title>
        <authorList>
            <person name="White O."/>
            <person name="Eisen J.A."/>
            <person name="Heidelberg J.F."/>
            <person name="Hickey E.K."/>
            <person name="Peterson J.D."/>
            <person name="Dodson R.J."/>
            <person name="Haft D.H."/>
            <person name="Gwinn M.L."/>
            <person name="Nelson W.C."/>
            <person name="Richardson D.L."/>
            <person name="Moffat K.S."/>
            <person name="Qin H."/>
            <person name="Jiang L."/>
            <person name="Pamphile W."/>
            <person name="Crosby M."/>
            <person name="Shen M."/>
            <person name="Vamathevan J.J."/>
            <person name="Lam P."/>
            <person name="McDonald L.A."/>
            <person name="Utterback T.R."/>
            <person name="Zalewski C."/>
            <person name="Makarova K.S."/>
            <person name="Aravind L."/>
            <person name="Daly M.J."/>
            <person name="Minton K.W."/>
            <person name="Fleischmann R.D."/>
            <person name="Ketchum K.A."/>
            <person name="Nelson K.E."/>
            <person name="Salzberg S.L."/>
            <person name="Smith H.O."/>
            <person name="Venter J.C."/>
            <person name="Fraser C.M."/>
        </authorList>
    </citation>
    <scope>NUCLEOTIDE SEQUENCE [LARGE SCALE GENOMIC DNA]</scope>
    <source>
        <strain>ATCC 13939 / DSM 20539 / JCM 16871 / CCUG 27074 / LMG 4051 / NBRC 15346 / NCIMB 9279 / VKM B-1422 / R1</strain>
    </source>
</reference>
<reference key="2">
    <citation type="journal article" date="2004" name="Biochem. Biophys. Res. Commun.">
        <title>Protein recycling is a major component of post-irradiation recovery in Deinococcus radiodurans strain R1.</title>
        <authorList>
            <person name="Joshi B.S."/>
            <person name="Schmid R."/>
            <person name="Altendorf K."/>
            <person name="Apte S.K."/>
        </authorList>
    </citation>
    <scope>PROTEIN SEQUENCE OF 1-19</scope>
    <source>
        <strain>ATCC 13939 / DSM 20539 / JCM 16871 / CCUG 27074 / LMG 4051 / NBRC 15346 / NCIMB 9279 / VKM B-1422 / R1</strain>
    </source>
</reference>